<protein>
    <recommendedName>
        <fullName evidence="1">Arginine N-succinyltransferase</fullName>
        <shortName evidence="1">AST</shortName>
        <ecNumber evidence="1">2.3.1.109</ecNumber>
    </recommendedName>
    <alternativeName>
        <fullName evidence="1">AOST</fullName>
    </alternativeName>
</protein>
<sequence>MMVIRPVERSDVSALMQLASKTGGGLTSLPANEATLSARIERAIKTWQGELPKSEQGYVFVLEDSETGTVAGICAIEVAVGLNDPWYNYRVGTLVHASKELNVYNALPTLFLSNDHTGSSELCTLFLDPDWRKEGNGYLLSKSRFMFMAAFRDKFNDKVVAEMRGVIDEHGYSPFWQSLGKRFFSMDFSRADFLCGTGQKAFIAELMPKHPIYTHFLSQEAQDVIGQVHPQTAPARAVLEKEGFRYRNYIDIFDGGPTLECDIDRVRAIRKSRLVEVAEGQPAQGDFPACLVANENYHHFRVVLVRTDPATERLILTAAQLDALKCHAGDRVRLVRLCAEEKTA</sequence>
<comment type="function">
    <text evidence="1">Catalyzes the transfer of succinyl-CoA to arginine to produce N(2)-succinylarginine.</text>
</comment>
<comment type="catalytic activity">
    <reaction evidence="1">
        <text>succinyl-CoA + L-arginine = N(2)-succinyl-L-arginine + CoA + H(+)</text>
        <dbReference type="Rhea" id="RHEA:15185"/>
        <dbReference type="ChEBI" id="CHEBI:15378"/>
        <dbReference type="ChEBI" id="CHEBI:32682"/>
        <dbReference type="ChEBI" id="CHEBI:57287"/>
        <dbReference type="ChEBI" id="CHEBI:57292"/>
        <dbReference type="ChEBI" id="CHEBI:58241"/>
        <dbReference type="EC" id="2.3.1.109"/>
    </reaction>
</comment>
<comment type="pathway">
    <text evidence="1">Amino-acid degradation; L-arginine degradation via AST pathway; L-glutamate and succinate from L-arginine: step 1/5.</text>
</comment>
<comment type="similarity">
    <text evidence="1">Belongs to the arginine N-succinyltransferase family.</text>
</comment>
<gene>
    <name evidence="1" type="primary">astA</name>
    <name type="ordered locus">BWG_1560</name>
</gene>
<evidence type="ECO:0000255" key="1">
    <source>
        <dbReference type="HAMAP-Rule" id="MF_01171"/>
    </source>
</evidence>
<proteinExistence type="inferred from homology"/>
<accession>C4ZZA3</accession>
<reference key="1">
    <citation type="journal article" date="2009" name="J. Bacteriol.">
        <title>Genomic sequencing reveals regulatory mutations and recombinational events in the widely used MC4100 lineage of Escherichia coli K-12.</title>
        <authorList>
            <person name="Ferenci T."/>
            <person name="Zhou Z."/>
            <person name="Betteridge T."/>
            <person name="Ren Y."/>
            <person name="Liu Y."/>
            <person name="Feng L."/>
            <person name="Reeves P.R."/>
            <person name="Wang L."/>
        </authorList>
    </citation>
    <scope>NUCLEOTIDE SEQUENCE [LARGE SCALE GENOMIC DNA]</scope>
    <source>
        <strain>K12 / MC4100 / BW2952</strain>
    </source>
</reference>
<name>ASTA_ECOBW</name>
<keyword id="KW-0012">Acyltransferase</keyword>
<keyword id="KW-0056">Arginine metabolism</keyword>
<keyword id="KW-0808">Transferase</keyword>
<feature type="chain" id="PRO_1000213737" description="Arginine N-succinyltransferase">
    <location>
        <begin position="1"/>
        <end position="344"/>
    </location>
</feature>
<feature type="active site" description="Proton donor" evidence="1">
    <location>
        <position position="229"/>
    </location>
</feature>
<feature type="binding site" evidence="1">
    <location>
        <position position="125"/>
    </location>
    <ligand>
        <name>succinyl-CoA</name>
        <dbReference type="ChEBI" id="CHEBI:57292"/>
    </ligand>
</feature>
<dbReference type="EC" id="2.3.1.109" evidence="1"/>
<dbReference type="EMBL" id="CP001396">
    <property type="protein sequence ID" value="ACR62002.1"/>
    <property type="molecule type" value="Genomic_DNA"/>
</dbReference>
<dbReference type="RefSeq" id="WP_000989419.1">
    <property type="nucleotide sequence ID" value="NC_012759.1"/>
</dbReference>
<dbReference type="SMR" id="C4ZZA3"/>
<dbReference type="GeneID" id="75171814"/>
<dbReference type="KEGG" id="ebw:BWG_1560"/>
<dbReference type="HOGENOM" id="CLU_057655_0_0_6"/>
<dbReference type="UniPathway" id="UPA00185">
    <property type="reaction ID" value="UER00279"/>
</dbReference>
<dbReference type="GO" id="GO:0008791">
    <property type="term" value="F:arginine N-succinyltransferase activity"/>
    <property type="evidence" value="ECO:0007669"/>
    <property type="project" value="UniProtKB-UniRule"/>
</dbReference>
<dbReference type="GO" id="GO:0019544">
    <property type="term" value="P:arginine catabolic process to glutamate"/>
    <property type="evidence" value="ECO:0007669"/>
    <property type="project" value="UniProtKB-UniRule"/>
</dbReference>
<dbReference type="GO" id="GO:0019545">
    <property type="term" value="P:arginine catabolic process to succinate"/>
    <property type="evidence" value="ECO:0007669"/>
    <property type="project" value="UniProtKB-UniRule"/>
</dbReference>
<dbReference type="Gene3D" id="2.40.40.20">
    <property type="match status" value="1"/>
</dbReference>
<dbReference type="Gene3D" id="3.40.630.30">
    <property type="match status" value="1"/>
</dbReference>
<dbReference type="HAMAP" id="MF_01171">
    <property type="entry name" value="AstA"/>
    <property type="match status" value="1"/>
</dbReference>
<dbReference type="InterPro" id="IPR016181">
    <property type="entry name" value="Acyl_CoA_acyltransferase"/>
</dbReference>
<dbReference type="InterPro" id="IPR007041">
    <property type="entry name" value="Arg_succinylTrfase_AstA/AruG"/>
</dbReference>
<dbReference type="InterPro" id="IPR017650">
    <property type="entry name" value="Arginine_N-succinylTrfase"/>
</dbReference>
<dbReference type="NCBIfam" id="TIGR03243">
    <property type="entry name" value="arg_catab_AOST"/>
    <property type="match status" value="1"/>
</dbReference>
<dbReference type="NCBIfam" id="TIGR03244">
    <property type="entry name" value="arg_catab_AstA"/>
    <property type="match status" value="1"/>
</dbReference>
<dbReference type="NCBIfam" id="NF007770">
    <property type="entry name" value="PRK10456.1"/>
    <property type="match status" value="1"/>
</dbReference>
<dbReference type="PANTHER" id="PTHR30420:SF1">
    <property type="entry name" value="ARGININE N-SUCCINYLTRANSFERASE"/>
    <property type="match status" value="1"/>
</dbReference>
<dbReference type="PANTHER" id="PTHR30420">
    <property type="entry name" value="N-SUCCINYLARGININE DIHYDROLASE"/>
    <property type="match status" value="1"/>
</dbReference>
<dbReference type="Pfam" id="PF04958">
    <property type="entry name" value="AstA"/>
    <property type="match status" value="1"/>
</dbReference>
<dbReference type="SUPFAM" id="SSF55729">
    <property type="entry name" value="Acyl-CoA N-acyltransferases (Nat)"/>
    <property type="match status" value="1"/>
</dbReference>
<organism>
    <name type="scientific">Escherichia coli (strain K12 / MC4100 / BW2952)</name>
    <dbReference type="NCBI Taxonomy" id="595496"/>
    <lineage>
        <taxon>Bacteria</taxon>
        <taxon>Pseudomonadati</taxon>
        <taxon>Pseudomonadota</taxon>
        <taxon>Gammaproteobacteria</taxon>
        <taxon>Enterobacterales</taxon>
        <taxon>Enterobacteriaceae</taxon>
        <taxon>Escherichia</taxon>
    </lineage>
</organism>